<protein>
    <recommendedName>
        <fullName evidence="1">ATP synthase subunit alpha</fullName>
        <ecNumber evidence="1">7.1.2.2</ecNumber>
    </recommendedName>
    <alternativeName>
        <fullName evidence="1">ATP synthase F1 sector subunit alpha</fullName>
    </alternativeName>
    <alternativeName>
        <fullName evidence="1">F-ATPase subunit alpha</fullName>
    </alternativeName>
</protein>
<dbReference type="EC" id="7.1.2.2" evidence="1"/>
<dbReference type="EMBL" id="CP001098">
    <property type="protein sequence ID" value="ACL70531.1"/>
    <property type="molecule type" value="Genomic_DNA"/>
</dbReference>
<dbReference type="RefSeq" id="WP_015923501.1">
    <property type="nucleotide sequence ID" value="NC_011899.1"/>
</dbReference>
<dbReference type="SMR" id="B8CZ12"/>
<dbReference type="STRING" id="373903.Hore_17820"/>
<dbReference type="KEGG" id="hor:Hore_17820"/>
<dbReference type="eggNOG" id="COG0056">
    <property type="taxonomic scope" value="Bacteria"/>
</dbReference>
<dbReference type="HOGENOM" id="CLU_010091_2_1_9"/>
<dbReference type="OrthoDB" id="9803053at2"/>
<dbReference type="Proteomes" id="UP000000719">
    <property type="component" value="Chromosome"/>
</dbReference>
<dbReference type="GO" id="GO:0005886">
    <property type="term" value="C:plasma membrane"/>
    <property type="evidence" value="ECO:0007669"/>
    <property type="project" value="UniProtKB-SubCell"/>
</dbReference>
<dbReference type="GO" id="GO:0045259">
    <property type="term" value="C:proton-transporting ATP synthase complex"/>
    <property type="evidence" value="ECO:0007669"/>
    <property type="project" value="UniProtKB-KW"/>
</dbReference>
<dbReference type="GO" id="GO:0043531">
    <property type="term" value="F:ADP binding"/>
    <property type="evidence" value="ECO:0007669"/>
    <property type="project" value="TreeGrafter"/>
</dbReference>
<dbReference type="GO" id="GO:0005524">
    <property type="term" value="F:ATP binding"/>
    <property type="evidence" value="ECO:0007669"/>
    <property type="project" value="UniProtKB-UniRule"/>
</dbReference>
<dbReference type="GO" id="GO:0046933">
    <property type="term" value="F:proton-transporting ATP synthase activity, rotational mechanism"/>
    <property type="evidence" value="ECO:0007669"/>
    <property type="project" value="UniProtKB-UniRule"/>
</dbReference>
<dbReference type="CDD" id="cd18113">
    <property type="entry name" value="ATP-synt_F1_alpha_C"/>
    <property type="match status" value="1"/>
</dbReference>
<dbReference type="CDD" id="cd18116">
    <property type="entry name" value="ATP-synt_F1_alpha_N"/>
    <property type="match status" value="1"/>
</dbReference>
<dbReference type="CDD" id="cd01132">
    <property type="entry name" value="F1-ATPase_alpha_CD"/>
    <property type="match status" value="1"/>
</dbReference>
<dbReference type="FunFam" id="1.20.150.20:FF:000001">
    <property type="entry name" value="ATP synthase subunit alpha"/>
    <property type="match status" value="1"/>
</dbReference>
<dbReference type="FunFam" id="2.40.30.20:FF:000001">
    <property type="entry name" value="ATP synthase subunit alpha"/>
    <property type="match status" value="1"/>
</dbReference>
<dbReference type="FunFam" id="3.40.50.300:FF:000002">
    <property type="entry name" value="ATP synthase subunit alpha"/>
    <property type="match status" value="1"/>
</dbReference>
<dbReference type="Gene3D" id="2.40.30.20">
    <property type="match status" value="1"/>
</dbReference>
<dbReference type="Gene3D" id="1.20.150.20">
    <property type="entry name" value="ATP synthase alpha/beta chain, C-terminal domain"/>
    <property type="match status" value="1"/>
</dbReference>
<dbReference type="Gene3D" id="3.40.50.300">
    <property type="entry name" value="P-loop containing nucleotide triphosphate hydrolases"/>
    <property type="match status" value="1"/>
</dbReference>
<dbReference type="HAMAP" id="MF_01346">
    <property type="entry name" value="ATP_synth_alpha_bact"/>
    <property type="match status" value="1"/>
</dbReference>
<dbReference type="InterPro" id="IPR023366">
    <property type="entry name" value="ATP_synth_asu-like_sf"/>
</dbReference>
<dbReference type="InterPro" id="IPR000793">
    <property type="entry name" value="ATP_synth_asu_C"/>
</dbReference>
<dbReference type="InterPro" id="IPR038376">
    <property type="entry name" value="ATP_synth_asu_C_sf"/>
</dbReference>
<dbReference type="InterPro" id="IPR033732">
    <property type="entry name" value="ATP_synth_F1_a_nt-bd_dom"/>
</dbReference>
<dbReference type="InterPro" id="IPR005294">
    <property type="entry name" value="ATP_synth_F1_asu"/>
</dbReference>
<dbReference type="InterPro" id="IPR020003">
    <property type="entry name" value="ATPase_a/bsu_AS"/>
</dbReference>
<dbReference type="InterPro" id="IPR004100">
    <property type="entry name" value="ATPase_F1/V1/A1_a/bsu_N"/>
</dbReference>
<dbReference type="InterPro" id="IPR036121">
    <property type="entry name" value="ATPase_F1/V1/A1_a/bsu_N_sf"/>
</dbReference>
<dbReference type="InterPro" id="IPR000194">
    <property type="entry name" value="ATPase_F1/V1/A1_a/bsu_nucl-bd"/>
</dbReference>
<dbReference type="InterPro" id="IPR027417">
    <property type="entry name" value="P-loop_NTPase"/>
</dbReference>
<dbReference type="NCBIfam" id="TIGR00962">
    <property type="entry name" value="atpA"/>
    <property type="match status" value="1"/>
</dbReference>
<dbReference type="NCBIfam" id="NF009884">
    <property type="entry name" value="PRK13343.1"/>
    <property type="match status" value="1"/>
</dbReference>
<dbReference type="PANTHER" id="PTHR48082">
    <property type="entry name" value="ATP SYNTHASE SUBUNIT ALPHA, MITOCHONDRIAL"/>
    <property type="match status" value="1"/>
</dbReference>
<dbReference type="PANTHER" id="PTHR48082:SF2">
    <property type="entry name" value="ATP SYNTHASE SUBUNIT ALPHA, MITOCHONDRIAL"/>
    <property type="match status" value="1"/>
</dbReference>
<dbReference type="Pfam" id="PF00006">
    <property type="entry name" value="ATP-synt_ab"/>
    <property type="match status" value="1"/>
</dbReference>
<dbReference type="Pfam" id="PF00306">
    <property type="entry name" value="ATP-synt_ab_C"/>
    <property type="match status" value="1"/>
</dbReference>
<dbReference type="Pfam" id="PF02874">
    <property type="entry name" value="ATP-synt_ab_N"/>
    <property type="match status" value="1"/>
</dbReference>
<dbReference type="PIRSF" id="PIRSF039088">
    <property type="entry name" value="F_ATPase_subunit_alpha"/>
    <property type="match status" value="1"/>
</dbReference>
<dbReference type="SUPFAM" id="SSF47917">
    <property type="entry name" value="C-terminal domain of alpha and beta subunits of F1 ATP synthase"/>
    <property type="match status" value="1"/>
</dbReference>
<dbReference type="SUPFAM" id="SSF50615">
    <property type="entry name" value="N-terminal domain of alpha and beta subunits of F1 ATP synthase"/>
    <property type="match status" value="1"/>
</dbReference>
<dbReference type="SUPFAM" id="SSF52540">
    <property type="entry name" value="P-loop containing nucleoside triphosphate hydrolases"/>
    <property type="match status" value="1"/>
</dbReference>
<dbReference type="PROSITE" id="PS00152">
    <property type="entry name" value="ATPASE_ALPHA_BETA"/>
    <property type="match status" value="1"/>
</dbReference>
<feature type="chain" id="PRO_1000166542" description="ATP synthase subunit alpha">
    <location>
        <begin position="1"/>
        <end position="541"/>
    </location>
</feature>
<feature type="region of interest" description="Disordered" evidence="2">
    <location>
        <begin position="506"/>
        <end position="541"/>
    </location>
</feature>
<feature type="compositionally biased region" description="Acidic residues" evidence="2">
    <location>
        <begin position="512"/>
        <end position="521"/>
    </location>
</feature>
<feature type="compositionally biased region" description="Acidic residues" evidence="2">
    <location>
        <begin position="531"/>
        <end position="541"/>
    </location>
</feature>
<feature type="binding site" evidence="1">
    <location>
        <begin position="169"/>
        <end position="176"/>
    </location>
    <ligand>
        <name>ATP</name>
        <dbReference type="ChEBI" id="CHEBI:30616"/>
    </ligand>
</feature>
<feature type="site" description="Required for activity" evidence="1">
    <location>
        <position position="363"/>
    </location>
</feature>
<keyword id="KW-0066">ATP synthesis</keyword>
<keyword id="KW-0067">ATP-binding</keyword>
<keyword id="KW-0997">Cell inner membrane</keyword>
<keyword id="KW-1003">Cell membrane</keyword>
<keyword id="KW-0139">CF(1)</keyword>
<keyword id="KW-0375">Hydrogen ion transport</keyword>
<keyword id="KW-0406">Ion transport</keyword>
<keyword id="KW-0472">Membrane</keyword>
<keyword id="KW-0547">Nucleotide-binding</keyword>
<keyword id="KW-1185">Reference proteome</keyword>
<keyword id="KW-1278">Translocase</keyword>
<keyword id="KW-0813">Transport</keyword>
<reference key="1">
    <citation type="journal article" date="2009" name="PLoS ONE">
        <title>Genome analysis of the anaerobic thermohalophilic bacterium Halothermothrix orenii.</title>
        <authorList>
            <person name="Mavromatis K."/>
            <person name="Ivanova N."/>
            <person name="Anderson I."/>
            <person name="Lykidis A."/>
            <person name="Hooper S.D."/>
            <person name="Sun H."/>
            <person name="Kunin V."/>
            <person name="Lapidus A."/>
            <person name="Hugenholtz P."/>
            <person name="Patel B."/>
            <person name="Kyrpides N.C."/>
        </authorList>
    </citation>
    <scope>NUCLEOTIDE SEQUENCE [LARGE SCALE GENOMIC DNA]</scope>
    <source>
        <strain>H 168 / OCM 544 / DSM 9562</strain>
    </source>
</reference>
<gene>
    <name evidence="1" type="primary">atpA</name>
    <name type="ordered locus">Hore_17820</name>
</gene>
<sequence length="541" mass="59751">MNLRPEEISSVIKKQIENYKSELETVSVGTVLDVGDGIAHVYGLDEVMASELLEFPNGVYGMALNLEEDSVGCVLLGDETRVKEGDTVKRTGRVVEVPVGEELLGRIVNSLGQPLDGKGQISVDKYRPVESPAPSVVDRKPVDTPLQTGLKAIDSMIPIGRGQRELIIGDRQTGKTAIAVDTIINQKDQDVICIYVAIGQKASTVAQIAERLKEHGAMDYTVIVSASASEPAPLQYIAPYAGCAIGEYFMYEKNRDVLVVYDDLSKHAVAYRSMSLLLRRPPGREAYPGDVFYLHSRLLERAARLNEDMGGGSLTALPIIETQAGDVSAYIPTNVISITDGQIYLESELFFAGVRPAINVGISVSRVGGAAQTKAMKKVAGTLRLDLSQYRELEAFAQFGSDLDKATQRRLERGERIVEVLKQPQYTPMDMEDQVMIIYTVVNGHLDDIPVDNIERFEDEFLSYIHSNYPEIPETIKKTGDLDDETEEKLTGVIKEFKENFNVKENTLLNVEEGDTGEEENNEGHNKAEQDTEEKDTEEVV</sequence>
<organism>
    <name type="scientific">Halothermothrix orenii (strain H 168 / OCM 544 / DSM 9562)</name>
    <dbReference type="NCBI Taxonomy" id="373903"/>
    <lineage>
        <taxon>Bacteria</taxon>
        <taxon>Bacillati</taxon>
        <taxon>Bacillota</taxon>
        <taxon>Clostridia</taxon>
        <taxon>Halanaerobiales</taxon>
        <taxon>Halothermotrichaceae</taxon>
        <taxon>Halothermothrix</taxon>
    </lineage>
</organism>
<comment type="function">
    <text evidence="1">Produces ATP from ADP in the presence of a proton gradient across the membrane. The alpha chain is a regulatory subunit.</text>
</comment>
<comment type="catalytic activity">
    <reaction evidence="1">
        <text>ATP + H2O + 4 H(+)(in) = ADP + phosphate + 5 H(+)(out)</text>
        <dbReference type="Rhea" id="RHEA:57720"/>
        <dbReference type="ChEBI" id="CHEBI:15377"/>
        <dbReference type="ChEBI" id="CHEBI:15378"/>
        <dbReference type="ChEBI" id="CHEBI:30616"/>
        <dbReference type="ChEBI" id="CHEBI:43474"/>
        <dbReference type="ChEBI" id="CHEBI:456216"/>
        <dbReference type="EC" id="7.1.2.2"/>
    </reaction>
</comment>
<comment type="subunit">
    <text evidence="1">F-type ATPases have 2 components, CF(1) - the catalytic core - and CF(0) - the membrane proton channel. CF(1) has five subunits: alpha(3), beta(3), gamma(1), delta(1), epsilon(1). CF(0) has three main subunits: a(1), b(2) and c(9-12). The alpha and beta chains form an alternating ring which encloses part of the gamma chain. CF(1) is attached to CF(0) by a central stalk formed by the gamma and epsilon chains, while a peripheral stalk is formed by the delta and b chains.</text>
</comment>
<comment type="subcellular location">
    <subcellularLocation>
        <location evidence="1">Cell inner membrane</location>
        <topology evidence="1">Peripheral membrane protein</topology>
    </subcellularLocation>
</comment>
<comment type="similarity">
    <text evidence="1">Belongs to the ATPase alpha/beta chains family.</text>
</comment>
<name>ATPA_HALOH</name>
<proteinExistence type="inferred from homology"/>
<evidence type="ECO:0000255" key="1">
    <source>
        <dbReference type="HAMAP-Rule" id="MF_01346"/>
    </source>
</evidence>
<evidence type="ECO:0000256" key="2">
    <source>
        <dbReference type="SAM" id="MobiDB-lite"/>
    </source>
</evidence>
<accession>B8CZ12</accession>